<accession>Q8HVR5</accession>
<reference key="1">
    <citation type="submission" date="2003-01" db="EMBL/GenBank/DDBJ databases">
        <title>Chloroplast DNA phylogeny of tribe Heliantheae (Asteraceae).</title>
        <authorList>
            <person name="Panero J.L."/>
            <person name="Baldwin B.G."/>
            <person name="Schilling E.E."/>
            <person name="Clevinger J.A."/>
        </authorList>
    </citation>
    <scope>NUCLEOTIDE SEQUENCE [GENOMIC DNA]</scope>
</reference>
<evidence type="ECO:0000255" key="1">
    <source>
        <dbReference type="HAMAP-Rule" id="MF_01351"/>
    </source>
</evidence>
<proteinExistence type="inferred from homology"/>
<feature type="chain" id="PRO_0000250798" description="NAD(P)H-quinone oxidoreductase subunit I, chloroplastic">
    <location>
        <begin position="1"/>
        <end position="166"/>
    </location>
</feature>
<feature type="domain" description="4Fe-4S ferredoxin-type 1" evidence="1">
    <location>
        <begin position="55"/>
        <end position="84"/>
    </location>
</feature>
<feature type="domain" description="4Fe-4S ferredoxin-type 2" evidence="1">
    <location>
        <begin position="95"/>
        <end position="124"/>
    </location>
</feature>
<feature type="binding site" evidence="1">
    <location>
        <position position="64"/>
    </location>
    <ligand>
        <name>[4Fe-4S] cluster</name>
        <dbReference type="ChEBI" id="CHEBI:49883"/>
        <label>1</label>
    </ligand>
</feature>
<feature type="binding site" evidence="1">
    <location>
        <position position="67"/>
    </location>
    <ligand>
        <name>[4Fe-4S] cluster</name>
        <dbReference type="ChEBI" id="CHEBI:49883"/>
        <label>1</label>
    </ligand>
</feature>
<feature type="binding site" evidence="1">
    <location>
        <position position="70"/>
    </location>
    <ligand>
        <name>[4Fe-4S] cluster</name>
        <dbReference type="ChEBI" id="CHEBI:49883"/>
        <label>1</label>
    </ligand>
</feature>
<feature type="binding site" evidence="1">
    <location>
        <position position="74"/>
    </location>
    <ligand>
        <name>[4Fe-4S] cluster</name>
        <dbReference type="ChEBI" id="CHEBI:49883"/>
        <label>2</label>
    </ligand>
</feature>
<feature type="binding site" evidence="1">
    <location>
        <position position="104"/>
    </location>
    <ligand>
        <name>[4Fe-4S] cluster</name>
        <dbReference type="ChEBI" id="CHEBI:49883"/>
        <label>2</label>
    </ligand>
</feature>
<feature type="binding site" evidence="1">
    <location>
        <position position="107"/>
    </location>
    <ligand>
        <name>[4Fe-4S] cluster</name>
        <dbReference type="ChEBI" id="CHEBI:49883"/>
        <label>2</label>
    </ligand>
</feature>
<feature type="binding site" evidence="1">
    <location>
        <position position="110"/>
    </location>
    <ligand>
        <name>[4Fe-4S] cluster</name>
        <dbReference type="ChEBI" id="CHEBI:49883"/>
        <label>2</label>
    </ligand>
</feature>
<feature type="binding site" evidence="1">
    <location>
        <position position="114"/>
    </location>
    <ligand>
        <name>[4Fe-4S] cluster</name>
        <dbReference type="ChEBI" id="CHEBI:49883"/>
        <label>1</label>
    </ligand>
</feature>
<geneLocation type="chloroplast"/>
<protein>
    <recommendedName>
        <fullName evidence="1">NAD(P)H-quinone oxidoreductase subunit I, chloroplastic</fullName>
        <ecNumber evidence="1">7.1.1.-</ecNumber>
    </recommendedName>
    <alternativeName>
        <fullName evidence="1">NAD(P)H dehydrogenase subunit I</fullName>
        <shortName evidence="1">NDH subunit I</shortName>
    </alternativeName>
    <alternativeName>
        <fullName evidence="1">NADH-plastoquinone oxidoreductase subunit I</fullName>
    </alternativeName>
</protein>
<organism>
    <name type="scientific">Hulsea algida</name>
    <name type="common">Pacific hulsea</name>
    <dbReference type="NCBI Taxonomy" id="4252"/>
    <lineage>
        <taxon>Eukaryota</taxon>
        <taxon>Viridiplantae</taxon>
        <taxon>Streptophyta</taxon>
        <taxon>Embryophyta</taxon>
        <taxon>Tracheophyta</taxon>
        <taxon>Spermatophyta</taxon>
        <taxon>Magnoliopsida</taxon>
        <taxon>eudicotyledons</taxon>
        <taxon>Gunneridae</taxon>
        <taxon>Pentapetalae</taxon>
        <taxon>asterids</taxon>
        <taxon>campanulids</taxon>
        <taxon>Asterales</taxon>
        <taxon>Asteraceae</taxon>
        <taxon>Asteroideae</taxon>
        <taxon>Heliantheae alliance</taxon>
        <taxon>Madieae</taxon>
        <taxon>Hulseinae</taxon>
        <taxon>Hulsea</taxon>
    </lineage>
</organism>
<sequence>MFPMVTQFMNYGQQTVRAARYIGQGLIITLSHANRLPVTIQYPYEKLITSERFRGRIHFEFDKCIACEVCVRVCPIDLPVVDWKLETDIRKKRLLNYSIDFGICIFCGNCVEYCPTNCLSMTEEYELSTYDRHELNYNQIALGRLPMSIIDDYTIRTILNLPEIKT</sequence>
<comment type="function">
    <text evidence="1">NDH shuttles electrons from NAD(P)H:plastoquinone, via FMN and iron-sulfur (Fe-S) centers, to quinones in the photosynthetic chain and possibly in a chloroplast respiratory chain. The immediate electron acceptor for the enzyme in this species is believed to be plastoquinone. Couples the redox reaction to proton translocation, and thus conserves the redox energy in a proton gradient.</text>
</comment>
<comment type="catalytic activity">
    <reaction evidence="1">
        <text>a plastoquinone + NADH + (n+1) H(+)(in) = a plastoquinol + NAD(+) + n H(+)(out)</text>
        <dbReference type="Rhea" id="RHEA:42608"/>
        <dbReference type="Rhea" id="RHEA-COMP:9561"/>
        <dbReference type="Rhea" id="RHEA-COMP:9562"/>
        <dbReference type="ChEBI" id="CHEBI:15378"/>
        <dbReference type="ChEBI" id="CHEBI:17757"/>
        <dbReference type="ChEBI" id="CHEBI:57540"/>
        <dbReference type="ChEBI" id="CHEBI:57945"/>
        <dbReference type="ChEBI" id="CHEBI:62192"/>
    </reaction>
</comment>
<comment type="catalytic activity">
    <reaction evidence="1">
        <text>a plastoquinone + NADPH + (n+1) H(+)(in) = a plastoquinol + NADP(+) + n H(+)(out)</text>
        <dbReference type="Rhea" id="RHEA:42612"/>
        <dbReference type="Rhea" id="RHEA-COMP:9561"/>
        <dbReference type="Rhea" id="RHEA-COMP:9562"/>
        <dbReference type="ChEBI" id="CHEBI:15378"/>
        <dbReference type="ChEBI" id="CHEBI:17757"/>
        <dbReference type="ChEBI" id="CHEBI:57783"/>
        <dbReference type="ChEBI" id="CHEBI:58349"/>
        <dbReference type="ChEBI" id="CHEBI:62192"/>
    </reaction>
</comment>
<comment type="cofactor">
    <cofactor evidence="1">
        <name>[4Fe-4S] cluster</name>
        <dbReference type="ChEBI" id="CHEBI:49883"/>
    </cofactor>
    <text evidence="1">Binds 2 [4Fe-4S] clusters per subunit.</text>
</comment>
<comment type="subunit">
    <text evidence="1">NDH is composed of at least 16 different subunits, 5 of which are encoded in the nucleus.</text>
</comment>
<comment type="subcellular location">
    <subcellularLocation>
        <location evidence="1">Plastid</location>
        <location evidence="1">Chloroplast thylakoid membrane</location>
        <topology evidence="1">Peripheral membrane protein</topology>
    </subcellularLocation>
</comment>
<comment type="similarity">
    <text evidence="1">Belongs to the complex I 23 kDa subunit family.</text>
</comment>
<dbReference type="EC" id="7.1.1.-" evidence="1"/>
<dbReference type="EMBL" id="AF383798">
    <property type="protein sequence ID" value="AAN61739.1"/>
    <property type="molecule type" value="Genomic_DNA"/>
</dbReference>
<dbReference type="SMR" id="Q8HVR5"/>
<dbReference type="GO" id="GO:0009535">
    <property type="term" value="C:chloroplast thylakoid membrane"/>
    <property type="evidence" value="ECO:0007669"/>
    <property type="project" value="UniProtKB-SubCell"/>
</dbReference>
<dbReference type="GO" id="GO:0051539">
    <property type="term" value="F:4 iron, 4 sulfur cluster binding"/>
    <property type="evidence" value="ECO:0007669"/>
    <property type="project" value="UniProtKB-KW"/>
</dbReference>
<dbReference type="GO" id="GO:0005506">
    <property type="term" value="F:iron ion binding"/>
    <property type="evidence" value="ECO:0007669"/>
    <property type="project" value="UniProtKB-UniRule"/>
</dbReference>
<dbReference type="GO" id="GO:0008137">
    <property type="term" value="F:NADH dehydrogenase (ubiquinone) activity"/>
    <property type="evidence" value="ECO:0007669"/>
    <property type="project" value="InterPro"/>
</dbReference>
<dbReference type="GO" id="GO:0048038">
    <property type="term" value="F:quinone binding"/>
    <property type="evidence" value="ECO:0007669"/>
    <property type="project" value="UniProtKB-KW"/>
</dbReference>
<dbReference type="GO" id="GO:0019684">
    <property type="term" value="P:photosynthesis, light reaction"/>
    <property type="evidence" value="ECO:0007669"/>
    <property type="project" value="UniProtKB-UniRule"/>
</dbReference>
<dbReference type="FunFam" id="3.30.70.3270:FF:000006">
    <property type="entry name" value="NAD(P)H-quinone oxidoreductase subunit I, chloroplastic"/>
    <property type="match status" value="1"/>
</dbReference>
<dbReference type="Gene3D" id="3.30.70.3270">
    <property type="match status" value="1"/>
</dbReference>
<dbReference type="HAMAP" id="MF_01351">
    <property type="entry name" value="NDH1_NuoI"/>
    <property type="match status" value="1"/>
</dbReference>
<dbReference type="InterPro" id="IPR017896">
    <property type="entry name" value="4Fe4S_Fe-S-bd"/>
</dbReference>
<dbReference type="InterPro" id="IPR017900">
    <property type="entry name" value="4Fe4S_Fe_S_CS"/>
</dbReference>
<dbReference type="InterPro" id="IPR010226">
    <property type="entry name" value="NADH_quinone_OxRdtase_chainI"/>
</dbReference>
<dbReference type="InterPro" id="IPR004497">
    <property type="entry name" value="NDHI"/>
</dbReference>
<dbReference type="NCBIfam" id="TIGR00403">
    <property type="entry name" value="ndhI"/>
    <property type="match status" value="1"/>
</dbReference>
<dbReference type="NCBIfam" id="TIGR01971">
    <property type="entry name" value="NuoI"/>
    <property type="match status" value="1"/>
</dbReference>
<dbReference type="NCBIfam" id="NF004537">
    <property type="entry name" value="PRK05888.1-3"/>
    <property type="match status" value="1"/>
</dbReference>
<dbReference type="PANTHER" id="PTHR47275">
    <property type="entry name" value="NAD(P)H-QUINONE OXIDOREDUCTASE SUBUNIT I, CHLOROPLASTIC"/>
    <property type="match status" value="1"/>
</dbReference>
<dbReference type="PANTHER" id="PTHR47275:SF1">
    <property type="entry name" value="NAD(P)H-QUINONE OXIDOREDUCTASE SUBUNIT I, CHLOROPLASTIC"/>
    <property type="match status" value="1"/>
</dbReference>
<dbReference type="Pfam" id="PF00037">
    <property type="entry name" value="Fer4"/>
    <property type="match status" value="2"/>
</dbReference>
<dbReference type="SUPFAM" id="SSF54862">
    <property type="entry name" value="4Fe-4S ferredoxins"/>
    <property type="match status" value="1"/>
</dbReference>
<dbReference type="PROSITE" id="PS00198">
    <property type="entry name" value="4FE4S_FER_1"/>
    <property type="match status" value="2"/>
</dbReference>
<dbReference type="PROSITE" id="PS51379">
    <property type="entry name" value="4FE4S_FER_2"/>
    <property type="match status" value="2"/>
</dbReference>
<name>NDHI_HULAL</name>
<keyword id="KW-0004">4Fe-4S</keyword>
<keyword id="KW-0150">Chloroplast</keyword>
<keyword id="KW-0408">Iron</keyword>
<keyword id="KW-0411">Iron-sulfur</keyword>
<keyword id="KW-0472">Membrane</keyword>
<keyword id="KW-0479">Metal-binding</keyword>
<keyword id="KW-0520">NAD</keyword>
<keyword id="KW-0521">NADP</keyword>
<keyword id="KW-0934">Plastid</keyword>
<keyword id="KW-0618">Plastoquinone</keyword>
<keyword id="KW-0874">Quinone</keyword>
<keyword id="KW-0677">Repeat</keyword>
<keyword id="KW-0793">Thylakoid</keyword>
<keyword id="KW-1278">Translocase</keyword>
<gene>
    <name evidence="1" type="primary">ndhI</name>
</gene>